<dbReference type="EMBL" id="AF211856">
    <property type="protein sequence ID" value="AAF18995.1"/>
    <property type="molecule type" value="mRNA"/>
</dbReference>
<dbReference type="EMBL" id="AF076633">
    <property type="protein sequence ID" value="AAF31148.1"/>
    <property type="molecule type" value="mRNA"/>
</dbReference>
<dbReference type="RefSeq" id="NP_001009728.2">
    <property type="nucleotide sequence ID" value="NM_001009728.2"/>
</dbReference>
<dbReference type="SMR" id="Q9TT06"/>
<dbReference type="STRING" id="9940.ENSOARP00000010907"/>
<dbReference type="GlyCosmos" id="Q9TT06">
    <property type="glycosylation" value="1 site, No reported glycans"/>
</dbReference>
<dbReference type="PaxDb" id="9940-ENSOARP00000010907"/>
<dbReference type="GeneID" id="443033"/>
<dbReference type="KEGG" id="oas:443033"/>
<dbReference type="CTD" id="653509"/>
<dbReference type="eggNOG" id="KOG4297">
    <property type="taxonomic scope" value="Eukaryota"/>
</dbReference>
<dbReference type="OrthoDB" id="7357196at2759"/>
<dbReference type="Proteomes" id="UP000002356">
    <property type="component" value="Unplaced"/>
</dbReference>
<dbReference type="GO" id="GO:0005581">
    <property type="term" value="C:collagen trimer"/>
    <property type="evidence" value="ECO:0007669"/>
    <property type="project" value="UniProtKB-KW"/>
</dbReference>
<dbReference type="GO" id="GO:0005615">
    <property type="term" value="C:extracellular space"/>
    <property type="evidence" value="ECO:0007669"/>
    <property type="project" value="TreeGrafter"/>
</dbReference>
<dbReference type="GO" id="GO:0005771">
    <property type="term" value="C:multivesicular body"/>
    <property type="evidence" value="ECO:0007669"/>
    <property type="project" value="TreeGrafter"/>
</dbReference>
<dbReference type="GO" id="GO:0030246">
    <property type="term" value="F:carbohydrate binding"/>
    <property type="evidence" value="ECO:0007669"/>
    <property type="project" value="UniProtKB-KW"/>
</dbReference>
<dbReference type="GO" id="GO:0046872">
    <property type="term" value="F:metal ion binding"/>
    <property type="evidence" value="ECO:0007669"/>
    <property type="project" value="UniProtKB-KW"/>
</dbReference>
<dbReference type="GO" id="GO:0007585">
    <property type="term" value="P:respiratory gaseous exchange by respiratory system"/>
    <property type="evidence" value="ECO:0007669"/>
    <property type="project" value="UniProtKB-KW"/>
</dbReference>
<dbReference type="CDD" id="cd03591">
    <property type="entry name" value="CLECT_collectin_like"/>
    <property type="match status" value="1"/>
</dbReference>
<dbReference type="FunFam" id="3.10.100.10:FF:000056">
    <property type="entry name" value="Pulmonary surfactant-associated protein A"/>
    <property type="match status" value="1"/>
</dbReference>
<dbReference type="Gene3D" id="3.10.100.10">
    <property type="entry name" value="Mannose-Binding Protein A, subunit A"/>
    <property type="match status" value="1"/>
</dbReference>
<dbReference type="InterPro" id="IPR001304">
    <property type="entry name" value="C-type_lectin-like"/>
</dbReference>
<dbReference type="InterPro" id="IPR016186">
    <property type="entry name" value="C-type_lectin-like/link_sf"/>
</dbReference>
<dbReference type="InterPro" id="IPR018378">
    <property type="entry name" value="C-type_lectin_CS"/>
</dbReference>
<dbReference type="InterPro" id="IPR051077">
    <property type="entry name" value="Ca-dependent_lectin"/>
</dbReference>
<dbReference type="InterPro" id="IPR033990">
    <property type="entry name" value="Collectin_CTLD"/>
</dbReference>
<dbReference type="InterPro" id="IPR016187">
    <property type="entry name" value="CTDL_fold"/>
</dbReference>
<dbReference type="PANTHER" id="PTHR24024">
    <property type="entry name" value="PULMONARY SURFACTANT-ASSOCIATED PROTEIN A"/>
    <property type="match status" value="1"/>
</dbReference>
<dbReference type="PANTHER" id="PTHR24024:SF13">
    <property type="entry name" value="PULMONARY SURFACTANT-ASSOCIATED PROTEIN A1"/>
    <property type="match status" value="1"/>
</dbReference>
<dbReference type="Pfam" id="PF00059">
    <property type="entry name" value="Lectin_C"/>
    <property type="match status" value="1"/>
</dbReference>
<dbReference type="SMART" id="SM00034">
    <property type="entry name" value="CLECT"/>
    <property type="match status" value="1"/>
</dbReference>
<dbReference type="SUPFAM" id="SSF56436">
    <property type="entry name" value="C-type lectin-like"/>
    <property type="match status" value="1"/>
</dbReference>
<dbReference type="SUPFAM" id="SSF57944">
    <property type="entry name" value="Triple coiled coil domain of C-type lectins"/>
    <property type="match status" value="1"/>
</dbReference>
<dbReference type="PROSITE" id="PS00615">
    <property type="entry name" value="C_TYPE_LECTIN_1"/>
    <property type="match status" value="1"/>
</dbReference>
<dbReference type="PROSITE" id="PS50041">
    <property type="entry name" value="C_TYPE_LECTIN_2"/>
    <property type="match status" value="1"/>
</dbReference>
<keyword id="KW-0106">Calcium</keyword>
<keyword id="KW-0176">Collagen</keyword>
<keyword id="KW-1015">Disulfide bond</keyword>
<keyword id="KW-0272">Extracellular matrix</keyword>
<keyword id="KW-0305">Gaseous exchange</keyword>
<keyword id="KW-0325">Glycoprotein</keyword>
<keyword id="KW-0430">Lectin</keyword>
<keyword id="KW-0479">Metal-binding</keyword>
<keyword id="KW-1185">Reference proteome</keyword>
<keyword id="KW-0964">Secreted</keyword>
<keyword id="KW-0732">Signal</keyword>
<keyword id="KW-0767">Surface film</keyword>
<name>SFTPA_SHEEP</name>
<sequence>MLLCSLTLMLLWMVASGLECDTKEVCLGSPGIPGTPGSHGLPGRDGRDGIKGDPGPPGPMGPPGGMPGLPGRDGMTGAPGLPGERGEKGEPGERGPPGFPAYLDEELQGTLHEIRHQVLQSQGVLILQGSMLEVGEKVFSTNGQSLNFDAIKELCARAGGHIAAPRSPEENEAITSIVKKHNTYAYLGLAEGPTAGDFYYLDGAPVNYTNWYPGEPRGRGKEKCVEIYTDGQWNDKNCLQYRLAICEF</sequence>
<gene>
    <name type="primary">SFTPA1</name>
    <name type="synonym">SFTPA</name>
</gene>
<organism>
    <name type="scientific">Ovis aries</name>
    <name type="common">Sheep</name>
    <dbReference type="NCBI Taxonomy" id="9940"/>
    <lineage>
        <taxon>Eukaryota</taxon>
        <taxon>Metazoa</taxon>
        <taxon>Chordata</taxon>
        <taxon>Craniata</taxon>
        <taxon>Vertebrata</taxon>
        <taxon>Euteleostomi</taxon>
        <taxon>Mammalia</taxon>
        <taxon>Eutheria</taxon>
        <taxon>Laurasiatheria</taxon>
        <taxon>Artiodactyla</taxon>
        <taxon>Ruminantia</taxon>
        <taxon>Pecora</taxon>
        <taxon>Bovidae</taxon>
        <taxon>Caprinae</taxon>
        <taxon>Ovis</taxon>
    </lineage>
</organism>
<accession>Q9TT06</accession>
<protein>
    <recommendedName>
        <fullName>Pulmonary surfactant-associated protein A</fullName>
        <shortName>PSAP</shortName>
        <shortName>PSP-A</shortName>
        <shortName>SP-A</shortName>
    </recommendedName>
</protein>
<comment type="function">
    <text evidence="2">In presence of calcium ions, it binds to surfactant phospholipids and contributes to lower the surface tension at the air-liquid interface in the alveoli of the mammalian lung and is essential for normal respiration. Enhances the expression of MYO18A/SP-R210 on alveolar macrophages.</text>
</comment>
<comment type="subunit">
    <text evidence="3">Oligomeric complex of 6 set of homotrimers.</text>
</comment>
<comment type="subcellular location">
    <subcellularLocation>
        <location evidence="3">Secreted</location>
    </subcellularLocation>
    <subcellularLocation>
        <location evidence="3">Secreted</location>
        <location evidence="3">Extracellular space</location>
        <location evidence="3">Extracellular matrix</location>
    </subcellularLocation>
    <subcellularLocation>
        <location evidence="3">Secreted</location>
        <location evidence="3">Extracellular space</location>
        <location evidence="3">Surface film</location>
    </subcellularLocation>
</comment>
<comment type="similarity">
    <text evidence="7">Belongs to the SFTPA family.</text>
</comment>
<reference key="1">
    <citation type="journal article" date="2000" name="Am. J. Physiol.">
        <title>Ovine surfactant protein cDNAs: use in studies on fetal lung growth and maturation after prolonged hypoxemia.</title>
        <authorList>
            <person name="Braems G.A."/>
            <person name="Yao L.-J."/>
            <person name="Inchley K."/>
            <person name="Brickenden A."/>
            <person name="Han V.K.M."/>
            <person name="Grolla A."/>
            <person name="Challis J.R.G."/>
            <person name="Possmayer F."/>
        </authorList>
    </citation>
    <scope>NUCLEOTIDE SEQUENCE [MRNA]</scope>
    <source>
        <tissue>Lung</tissue>
    </source>
</reference>
<reference key="2">
    <citation type="journal article" date="2000" name="Am. J. Physiol.">
        <title>cDNA cloning of ovine pulmonary SP-A, SP-B, and SP-C: isolation of two different sequences for SP-B.</title>
        <authorList>
            <person name="Pietschmann S.M."/>
            <person name="Pison U."/>
        </authorList>
    </citation>
    <scope>NUCLEOTIDE SEQUENCE [MRNA]</scope>
    <source>
        <tissue>Lung</tissue>
    </source>
</reference>
<feature type="signal peptide" evidence="4">
    <location>
        <begin position="1"/>
        <end position="17"/>
    </location>
</feature>
<feature type="chain" id="PRO_0000017463" description="Pulmonary surfactant-associated protein A">
    <location>
        <begin position="18"/>
        <end position="248"/>
    </location>
</feature>
<feature type="domain" description="Collagen-like">
    <location>
        <begin position="28"/>
        <end position="100"/>
    </location>
</feature>
<feature type="domain" description="C-type lectin" evidence="5">
    <location>
        <begin position="127"/>
        <end position="247"/>
    </location>
</feature>
<feature type="region of interest" description="Disordered" evidence="6">
    <location>
        <begin position="29"/>
        <end position="103"/>
    </location>
</feature>
<feature type="compositionally biased region" description="Basic and acidic residues" evidence="6">
    <location>
        <begin position="42"/>
        <end position="51"/>
    </location>
</feature>
<feature type="compositionally biased region" description="Pro residues" evidence="6">
    <location>
        <begin position="54"/>
        <end position="65"/>
    </location>
</feature>
<feature type="compositionally biased region" description="Low complexity" evidence="6">
    <location>
        <begin position="69"/>
        <end position="82"/>
    </location>
</feature>
<feature type="compositionally biased region" description="Basic and acidic residues" evidence="6">
    <location>
        <begin position="84"/>
        <end position="93"/>
    </location>
</feature>
<feature type="binding site" evidence="1">
    <location>
        <position position="215"/>
    </location>
    <ligand>
        <name>Ca(2+)</name>
        <dbReference type="ChEBI" id="CHEBI:29108"/>
    </ligand>
</feature>
<feature type="binding site" evidence="1">
    <location>
        <position position="217"/>
    </location>
    <ligand>
        <name>Ca(2+)</name>
        <dbReference type="ChEBI" id="CHEBI:29108"/>
    </ligand>
</feature>
<feature type="binding site" evidence="1">
    <location>
        <position position="234"/>
    </location>
    <ligand>
        <name>Ca(2+)</name>
        <dbReference type="ChEBI" id="CHEBI:29108"/>
    </ligand>
</feature>
<feature type="binding site" evidence="1">
    <location>
        <position position="235"/>
    </location>
    <ligand>
        <name>Ca(2+)</name>
        <dbReference type="ChEBI" id="CHEBI:29108"/>
    </ligand>
</feature>
<feature type="glycosylation site" description="N-linked (GlcNAc...) asparagine" evidence="4">
    <location>
        <position position="207"/>
    </location>
</feature>
<feature type="disulfide bond" description="Interchain" evidence="5">
    <location>
        <position position="26"/>
    </location>
</feature>
<feature type="disulfide bond" evidence="5">
    <location>
        <begin position="155"/>
        <end position="246"/>
    </location>
</feature>
<feature type="disulfide bond" evidence="5">
    <location>
        <begin position="224"/>
        <end position="238"/>
    </location>
</feature>
<proteinExistence type="evidence at transcript level"/>
<evidence type="ECO:0000250" key="1"/>
<evidence type="ECO:0000250" key="2">
    <source>
        <dbReference type="UniProtKB" id="P35242"/>
    </source>
</evidence>
<evidence type="ECO:0000250" key="3">
    <source>
        <dbReference type="UniProtKB" id="Q8IWL2"/>
    </source>
</evidence>
<evidence type="ECO:0000255" key="4"/>
<evidence type="ECO:0000255" key="5">
    <source>
        <dbReference type="PROSITE-ProRule" id="PRU00040"/>
    </source>
</evidence>
<evidence type="ECO:0000256" key="6">
    <source>
        <dbReference type="SAM" id="MobiDB-lite"/>
    </source>
</evidence>
<evidence type="ECO:0000305" key="7"/>